<organism>
    <name type="scientific">Staphylococcus aureus (strain COL)</name>
    <dbReference type="NCBI Taxonomy" id="93062"/>
    <lineage>
        <taxon>Bacteria</taxon>
        <taxon>Bacillati</taxon>
        <taxon>Bacillota</taxon>
        <taxon>Bacilli</taxon>
        <taxon>Bacillales</taxon>
        <taxon>Staphylococcaceae</taxon>
        <taxon>Staphylococcus</taxon>
    </lineage>
</organism>
<proteinExistence type="inferred from homology"/>
<feature type="chain" id="PRO_0000259746" description="Lactonase drp35">
    <location>
        <begin position="1"/>
        <end position="324"/>
    </location>
</feature>
<feature type="active site" description="Proton donor" evidence="2">
    <location>
        <position position="235"/>
    </location>
</feature>
<feature type="binding site" evidence="1">
    <location>
        <position position="47"/>
    </location>
    <ligand>
        <name>Ca(2+)</name>
        <dbReference type="ChEBI" id="CHEBI:29108"/>
        <label>1</label>
        <note>catalytic</note>
    </ligand>
</feature>
<feature type="binding site" evidence="1">
    <location>
        <position position="109"/>
    </location>
    <ligand>
        <name>Ca(2+)</name>
        <dbReference type="ChEBI" id="CHEBI:29108"/>
        <label>2</label>
    </ligand>
</feature>
<feature type="binding site" evidence="1">
    <location>
        <position position="111"/>
    </location>
    <ligand>
        <name>Ca(2+)</name>
        <dbReference type="ChEBI" id="CHEBI:29108"/>
        <label>2</label>
    </ligand>
</feature>
<feature type="binding site" evidence="1">
    <location>
        <position position="129"/>
    </location>
    <ligand>
        <name>Ca(2+)</name>
        <dbReference type="ChEBI" id="CHEBI:29108"/>
        <label>2</label>
    </ligand>
</feature>
<feature type="binding site" evidence="1">
    <location>
        <position position="132"/>
    </location>
    <ligand>
        <name>Ca(2+)</name>
        <dbReference type="ChEBI" id="CHEBI:29108"/>
        <label>2</label>
    </ligand>
</feature>
<feature type="binding site" evidence="1">
    <location>
        <position position="134"/>
    </location>
    <ligand>
        <name>Ca(2+)</name>
        <dbReference type="ChEBI" id="CHEBI:29108"/>
        <label>2</label>
    </ligand>
</feature>
<feature type="binding site" evidence="1">
    <location>
        <position position="137"/>
    </location>
    <ligand>
        <name>Ca(2+)</name>
        <dbReference type="ChEBI" id="CHEBI:29108"/>
        <label>1</label>
        <note>catalytic</note>
    </ligand>
</feature>
<feature type="binding site" evidence="1">
    <location>
        <position position="184"/>
    </location>
    <ligand>
        <name>Ca(2+)</name>
        <dbReference type="ChEBI" id="CHEBI:29108"/>
        <label>1</label>
        <note>catalytic</note>
    </ligand>
</feature>
<feature type="binding site" evidence="1">
    <location>
        <position position="235"/>
    </location>
    <ligand>
        <name>Ca(2+)</name>
        <dbReference type="ChEBI" id="CHEBI:29108"/>
        <label>1</label>
        <note>catalytic</note>
    </ligand>
</feature>
<feature type="binding site" evidence="1">
    <location>
        <position position="236"/>
    </location>
    <ligand>
        <name>Ca(2+)</name>
        <dbReference type="ChEBI" id="CHEBI:29108"/>
        <label>1</label>
        <note>catalytic</note>
    </ligand>
</feature>
<accession>Q5HCK9</accession>
<sequence>MMSQQDLPTLFYSGKSNSAVPIISESELQTITAEPWLEISKKGLQLEGLNFDRQGQLFLLDVFEGNIFKINPETKEIKRPFVSHKANPAAIKIHKDGRLFVCYLGDFKSTGGIFAATENGDNLQDIIEDLSTAYCIDDMVFDSKGGFYFTDFRGYSTNPLGGVYYVSPDFRTVTPIIQNISVANGIALSTDEKVLWVTETTANRLHRIALEDDGVTIQPFGATIPYYFTGHEGPDSCCIDSDDNLYVAMYGQGRVLVFNKRGYPIGQILIPGRDEGHMLRSTHPQFIPGTNQLIICSNDIEMGGGSMLYTVNGFAKGHQSFQFQ</sequence>
<keyword id="KW-0106">Calcium</keyword>
<keyword id="KW-0963">Cytoplasm</keyword>
<keyword id="KW-0378">Hydrolase</keyword>
<keyword id="KW-0479">Metal-binding</keyword>
<protein>
    <recommendedName>
        <fullName>Lactonase drp35</fullName>
        <ecNumber>3.1.1.-</ecNumber>
    </recommendedName>
</protein>
<reference key="1">
    <citation type="journal article" date="2005" name="J. Bacteriol.">
        <title>Insights on evolution of virulence and resistance from the complete genome analysis of an early methicillin-resistant Staphylococcus aureus strain and a biofilm-producing methicillin-resistant Staphylococcus epidermidis strain.</title>
        <authorList>
            <person name="Gill S.R."/>
            <person name="Fouts D.E."/>
            <person name="Archer G.L."/>
            <person name="Mongodin E.F."/>
            <person name="DeBoy R.T."/>
            <person name="Ravel J."/>
            <person name="Paulsen I.T."/>
            <person name="Kolonay J.F."/>
            <person name="Brinkac L.M."/>
            <person name="Beanan M.J."/>
            <person name="Dodson R.J."/>
            <person name="Daugherty S.C."/>
            <person name="Madupu R."/>
            <person name="Angiuoli S.V."/>
            <person name="Durkin A.S."/>
            <person name="Haft D.H."/>
            <person name="Vamathevan J.J."/>
            <person name="Khouri H."/>
            <person name="Utterback T.R."/>
            <person name="Lee C."/>
            <person name="Dimitrov G."/>
            <person name="Jiang L."/>
            <person name="Qin H."/>
            <person name="Weidman J."/>
            <person name="Tran K."/>
            <person name="Kang K.H."/>
            <person name="Hance I.R."/>
            <person name="Nelson K.E."/>
            <person name="Fraser C.M."/>
        </authorList>
    </citation>
    <scope>NUCLEOTIDE SEQUENCE [LARGE SCALE GENOMIC DNA]</scope>
    <source>
        <strain>COL</strain>
    </source>
</reference>
<comment type="function">
    <text evidence="1">Exhibits lactonase activity. Acts in cells with perturbed membrane integrity and is possibly related to the membrane homeostasis (By similarity).</text>
</comment>
<comment type="cofactor">
    <cofactor evidence="1">
        <name>Ca(2+)</name>
        <dbReference type="ChEBI" id="CHEBI:29108"/>
    </cofactor>
    <text evidence="1">Binds 2 Ca(2+) ions per subunit.</text>
</comment>
<comment type="subcellular location">
    <subcellularLocation>
        <location evidence="1">Cytoplasm</location>
    </subcellularLocation>
</comment>
<comment type="similarity">
    <text evidence="3">Belongs to the SMP-30/CGR1 family.</text>
</comment>
<comment type="sequence caution" evidence="3">
    <conflict type="erroneous initiation">
        <sequence resource="EMBL-CDS" id="AAW37360"/>
    </conflict>
</comment>
<evidence type="ECO:0000250" key="1"/>
<evidence type="ECO:0000255" key="2"/>
<evidence type="ECO:0000305" key="3"/>
<dbReference type="EC" id="3.1.1.-"/>
<dbReference type="EMBL" id="CP000046">
    <property type="protein sequence ID" value="AAW37360.1"/>
    <property type="status" value="ALT_INIT"/>
    <property type="molecule type" value="Genomic_DNA"/>
</dbReference>
<dbReference type="SMR" id="Q5HCK9"/>
<dbReference type="KEGG" id="sac:SACOL2712"/>
<dbReference type="HOGENOM" id="CLU_036110_2_0_9"/>
<dbReference type="Proteomes" id="UP000000530">
    <property type="component" value="Chromosome"/>
</dbReference>
<dbReference type="GO" id="GO:0005737">
    <property type="term" value="C:cytoplasm"/>
    <property type="evidence" value="ECO:0007669"/>
    <property type="project" value="UniProtKB-SubCell"/>
</dbReference>
<dbReference type="GO" id="GO:0016787">
    <property type="term" value="F:hydrolase activity"/>
    <property type="evidence" value="ECO:0007669"/>
    <property type="project" value="UniProtKB-KW"/>
</dbReference>
<dbReference type="GO" id="GO:0046872">
    <property type="term" value="F:metal ion binding"/>
    <property type="evidence" value="ECO:0007669"/>
    <property type="project" value="UniProtKB-KW"/>
</dbReference>
<dbReference type="Gene3D" id="2.120.10.30">
    <property type="entry name" value="TolB, C-terminal domain"/>
    <property type="match status" value="1"/>
</dbReference>
<dbReference type="InterPro" id="IPR011042">
    <property type="entry name" value="6-blade_b-propeller_TolB-like"/>
</dbReference>
<dbReference type="InterPro" id="IPR013658">
    <property type="entry name" value="SGL"/>
</dbReference>
<dbReference type="InterPro" id="IPR051262">
    <property type="entry name" value="SMP-30/CGR1_Lactonase"/>
</dbReference>
<dbReference type="PANTHER" id="PTHR47572:SF4">
    <property type="entry name" value="LACTONASE DRP35"/>
    <property type="match status" value="1"/>
</dbReference>
<dbReference type="PANTHER" id="PTHR47572">
    <property type="entry name" value="LIPOPROTEIN-RELATED"/>
    <property type="match status" value="1"/>
</dbReference>
<dbReference type="Pfam" id="PF08450">
    <property type="entry name" value="SGL"/>
    <property type="match status" value="1"/>
</dbReference>
<dbReference type="SUPFAM" id="SSF63829">
    <property type="entry name" value="Calcium-dependent phosphotriesterase"/>
    <property type="match status" value="1"/>
</dbReference>
<gene>
    <name type="primary">drp35</name>
    <name type="ordered locus">SACOL2712</name>
</gene>
<name>DRP35_STAAC</name>